<accession>F2XF96</accession>
<feature type="transit peptide" description="Chloroplast" evidence="3">
    <location>
        <begin position="1"/>
        <end position="36"/>
    </location>
</feature>
<feature type="chain" id="PRO_0000454409" description="(-)-alpha-pinene synthase 2, chloroplastic">
    <location>
        <begin position="37"/>
        <end position="627"/>
    </location>
</feature>
<feature type="short sequence motif" description="DDXXD motif" evidence="1">
    <location>
        <begin position="378"/>
        <end position="382"/>
    </location>
</feature>
<feature type="binding site" evidence="2">
    <location>
        <position position="378"/>
    </location>
    <ligand>
        <name>Mg(2+)</name>
        <dbReference type="ChEBI" id="CHEBI:18420"/>
        <label>1</label>
    </ligand>
</feature>
<feature type="binding site" evidence="2">
    <location>
        <position position="378"/>
    </location>
    <ligand>
        <name>Mg(2+)</name>
        <dbReference type="ChEBI" id="CHEBI:18420"/>
        <label>2</label>
    </ligand>
</feature>
<feature type="binding site" evidence="2">
    <location>
        <position position="382"/>
    </location>
    <ligand>
        <name>Mg(2+)</name>
        <dbReference type="ChEBI" id="CHEBI:18420"/>
        <label>1</label>
    </ligand>
</feature>
<feature type="binding site" evidence="2">
    <location>
        <position position="382"/>
    </location>
    <ligand>
        <name>Mg(2+)</name>
        <dbReference type="ChEBI" id="CHEBI:18420"/>
        <label>2</label>
    </ligand>
</feature>
<feature type="binding site" evidence="2">
    <location>
        <position position="530"/>
    </location>
    <ligand>
        <name>Mg(2+)</name>
        <dbReference type="ChEBI" id="CHEBI:18420"/>
        <label>3</label>
    </ligand>
</feature>
<reference key="1">
    <citation type="journal article" date="2011" name="BMC Plant Biol.">
        <title>Transcriptome mining, functional characterization, and phylogeny of a large terpene synthase gene family in spruce (Picea spp.).</title>
        <authorList>
            <person name="Keeling C.I."/>
            <person name="Weisshaar S."/>
            <person name="Ralph S.G."/>
            <person name="Jancsik S."/>
            <person name="Hamberger B."/>
            <person name="Dullat H.K."/>
            <person name="Bohlmann J."/>
        </authorList>
    </citation>
    <scope>NUCLEOTIDE SEQUENCE [MRNA]</scope>
    <scope>CATALYTIC ACTIVITY</scope>
    <scope>FUNCTION</scope>
    <scope>PATHWAY</scope>
    <scope>GENE FAMILY</scope>
    <source>
        <strain>cv. PG29</strain>
    </source>
</reference>
<dbReference type="EC" id="4.2.3.119" evidence="4"/>
<dbReference type="EC" id="4.2.3.120" evidence="4"/>
<dbReference type="EMBL" id="HQ426154">
    <property type="protein sequence ID" value="ADZ45508.1"/>
    <property type="molecule type" value="mRNA"/>
</dbReference>
<dbReference type="SMR" id="F2XF96"/>
<dbReference type="UniPathway" id="UPA00924"/>
<dbReference type="GO" id="GO:0009507">
    <property type="term" value="C:chloroplast"/>
    <property type="evidence" value="ECO:0007669"/>
    <property type="project" value="UniProtKB-SubCell"/>
</dbReference>
<dbReference type="GO" id="GO:0016829">
    <property type="term" value="F:lyase activity"/>
    <property type="evidence" value="ECO:0000314"/>
    <property type="project" value="UniProtKB"/>
</dbReference>
<dbReference type="GO" id="GO:0000287">
    <property type="term" value="F:magnesium ion binding"/>
    <property type="evidence" value="ECO:0007669"/>
    <property type="project" value="InterPro"/>
</dbReference>
<dbReference type="GO" id="GO:0050550">
    <property type="term" value="F:pinene synthase activity"/>
    <property type="evidence" value="ECO:0000314"/>
    <property type="project" value="UniProtKB"/>
</dbReference>
<dbReference type="GO" id="GO:0046248">
    <property type="term" value="P:alpha-pinene biosynthetic process"/>
    <property type="evidence" value="ECO:0000314"/>
    <property type="project" value="UniProtKB"/>
</dbReference>
<dbReference type="GO" id="GO:0016102">
    <property type="term" value="P:diterpenoid biosynthetic process"/>
    <property type="evidence" value="ECO:0007669"/>
    <property type="project" value="InterPro"/>
</dbReference>
<dbReference type="GO" id="GO:0010597">
    <property type="term" value="P:green leaf volatile biosynthetic process"/>
    <property type="evidence" value="ECO:0000314"/>
    <property type="project" value="UniProtKB"/>
</dbReference>
<dbReference type="GO" id="GO:0016099">
    <property type="term" value="P:monoterpenoid biosynthetic process"/>
    <property type="evidence" value="ECO:0000314"/>
    <property type="project" value="UniProtKB"/>
</dbReference>
<dbReference type="CDD" id="cd00684">
    <property type="entry name" value="Terpene_cyclase_plant_C1"/>
    <property type="match status" value="1"/>
</dbReference>
<dbReference type="FunFam" id="1.50.10.130:FF:000004">
    <property type="entry name" value="Carene synthase, chloroplastic"/>
    <property type="match status" value="1"/>
</dbReference>
<dbReference type="FunFam" id="1.10.600.10:FF:000005">
    <property type="entry name" value="Ent-kaur-16-ene synthase, chloroplastic"/>
    <property type="match status" value="1"/>
</dbReference>
<dbReference type="Gene3D" id="1.10.600.10">
    <property type="entry name" value="Farnesyl Diphosphate Synthase"/>
    <property type="match status" value="1"/>
</dbReference>
<dbReference type="Gene3D" id="1.50.10.130">
    <property type="entry name" value="Terpene synthase, N-terminal domain"/>
    <property type="match status" value="1"/>
</dbReference>
<dbReference type="InterPro" id="IPR008949">
    <property type="entry name" value="Isoprenoid_synthase_dom_sf"/>
</dbReference>
<dbReference type="InterPro" id="IPR034741">
    <property type="entry name" value="Terpene_cyclase-like_1_C"/>
</dbReference>
<dbReference type="InterPro" id="IPR044814">
    <property type="entry name" value="Terpene_cyclase_plant_C1"/>
</dbReference>
<dbReference type="InterPro" id="IPR001906">
    <property type="entry name" value="Terpene_synth_N"/>
</dbReference>
<dbReference type="InterPro" id="IPR036965">
    <property type="entry name" value="Terpene_synth_N_sf"/>
</dbReference>
<dbReference type="InterPro" id="IPR050148">
    <property type="entry name" value="Terpene_synthase-like"/>
</dbReference>
<dbReference type="InterPro" id="IPR005630">
    <property type="entry name" value="Terpene_synthase_metal-bd"/>
</dbReference>
<dbReference type="InterPro" id="IPR008930">
    <property type="entry name" value="Terpenoid_cyclase/PrenylTrfase"/>
</dbReference>
<dbReference type="PANTHER" id="PTHR31225">
    <property type="entry name" value="OS04G0344100 PROTEIN-RELATED"/>
    <property type="match status" value="1"/>
</dbReference>
<dbReference type="Pfam" id="PF01397">
    <property type="entry name" value="Terpene_synth"/>
    <property type="match status" value="1"/>
</dbReference>
<dbReference type="Pfam" id="PF03936">
    <property type="entry name" value="Terpene_synth_C"/>
    <property type="match status" value="1"/>
</dbReference>
<dbReference type="SFLD" id="SFLDS00005">
    <property type="entry name" value="Isoprenoid_Synthase_Type_I"/>
    <property type="match status" value="1"/>
</dbReference>
<dbReference type="SFLD" id="SFLDG01019">
    <property type="entry name" value="Terpene_Cyclase_Like_1_C_Termi"/>
    <property type="match status" value="1"/>
</dbReference>
<dbReference type="SFLD" id="SFLDG01014">
    <property type="entry name" value="Terpene_Cyclase_Like_1_N-term"/>
    <property type="match status" value="1"/>
</dbReference>
<dbReference type="SUPFAM" id="SSF48239">
    <property type="entry name" value="Terpenoid cyclases/Protein prenyltransferases"/>
    <property type="match status" value="1"/>
</dbReference>
<dbReference type="SUPFAM" id="SSF48576">
    <property type="entry name" value="Terpenoid synthases"/>
    <property type="match status" value="1"/>
</dbReference>
<comment type="function">
    <text evidence="4">Terpene synthase (TPS) involved in the biosynthesis of monoterpene natural products included in conifer oleoresin secretions and volatile emissions; these compounds contribute to biotic and abiotic stress defense against herbivores and pathogens (PubMed:21385377). Catalyzes the conversion of (2E)-geranyl diphosphate (GPP) to (1S,5S)-beta-pinene (PubMed:21385377).</text>
</comment>
<comment type="catalytic activity">
    <reaction evidence="4">
        <text>(2E)-geranyl diphosphate = (1S,5S)-beta-pinene + diphosphate</text>
        <dbReference type="Rhea" id="RHEA:25496"/>
        <dbReference type="ChEBI" id="CHEBI:28359"/>
        <dbReference type="ChEBI" id="CHEBI:33019"/>
        <dbReference type="ChEBI" id="CHEBI:58057"/>
        <dbReference type="EC" id="4.2.3.120"/>
    </reaction>
</comment>
<comment type="catalytic activity">
    <reaction evidence="4">
        <text>(2E)-geranyl diphosphate = (1S,5S)-alpha-pinene + diphosphate</text>
        <dbReference type="Rhea" id="RHEA:25488"/>
        <dbReference type="ChEBI" id="CHEBI:28660"/>
        <dbReference type="ChEBI" id="CHEBI:33019"/>
        <dbReference type="ChEBI" id="CHEBI:58057"/>
        <dbReference type="EC" id="4.2.3.119"/>
    </reaction>
</comment>
<comment type="cofactor">
    <cofactor evidence="1">
        <name>Mg(2+)</name>
        <dbReference type="ChEBI" id="CHEBI:18420"/>
    </cofactor>
    <cofactor evidence="1">
        <name>Mn(2+)</name>
        <dbReference type="ChEBI" id="CHEBI:29035"/>
    </cofactor>
    <text evidence="1">Binds 3 Mg(2+) or Mn(2+) ions per subunit.</text>
</comment>
<comment type="pathway">
    <text evidence="4">Terpene metabolism; oleoresin biosynthesis.</text>
</comment>
<comment type="subcellular location">
    <subcellularLocation>
        <location evidence="3">Plastid</location>
        <location evidence="3">Chloroplast</location>
    </subcellularLocation>
</comment>
<comment type="domain">
    <text evidence="1">The Asp-Asp-Xaa-Xaa-Asp/Glu (DDXXD/E) motif is important for the catalytic activity, presumably through binding to Mg(2+).</text>
</comment>
<comment type="similarity">
    <text evidence="6">Belongs to the terpene synthase family. Tpsd subfamily.</text>
</comment>
<protein>
    <recommendedName>
        <fullName evidence="5">(-)-alpha-pinene synthase 2, chloroplastic</fullName>
        <ecNumber evidence="4">4.2.3.119</ecNumber>
    </recommendedName>
    <alternativeName>
        <fullName evidence="5">(-)-beta-pinene synthase 2</fullName>
        <ecNumber evidence="4">4.2.3.120</ecNumber>
    </alternativeName>
    <alternativeName>
        <fullName evidence="5">Terpene synthase TPS-Pin-2</fullName>
        <shortName>PgTPS-Pin-2</shortName>
    </alternativeName>
</protein>
<evidence type="ECO:0000250" key="1">
    <source>
        <dbReference type="UniProtKB" id="A0A1C9J6A7"/>
    </source>
</evidence>
<evidence type="ECO:0000250" key="2">
    <source>
        <dbReference type="UniProtKB" id="Q40577"/>
    </source>
</evidence>
<evidence type="ECO:0000255" key="3"/>
<evidence type="ECO:0000269" key="4">
    <source>
    </source>
</evidence>
<evidence type="ECO:0000303" key="5">
    <source>
    </source>
</evidence>
<evidence type="ECO:0000305" key="6"/>
<proteinExistence type="evidence at protein level"/>
<gene>
    <name evidence="5" type="primary">TPS-Pin-2</name>
</gene>
<sequence length="627" mass="71262">MALVSIAPLASKSCLHKSLSSSAHELKTICRTIPTLGMSRRGKSATPSMSMSLTTTVSDDGVQRRMGDFHSNLWNDDFIQSLSTSYGEPSYRERAERLIGEVKKMFNSMSSEDGELINPHNDLIQRVWMVDSVERLGIERHFKNEIKSALDYVYSYWSEKGIGCGRESVVADLNSTALGLRTLRLHGYAVSADVLNLFKDQNGQFACSPSQTEEEIGSVLNLYRASLIAFPGEKVMEEAEIFSAKYLEEALQKISVSSLSQEIRDVLEYGWHTYLPRMEARNHIDVFGQDTQNSKSCINTEKLLELAKLEFNIFHSLQKRELEYLVRWWKDSGSPQMTFGRHRHVEYYTLASCIAFEPQHSGFRLGFAKTCHIITILDDMYDTFGTVDELELFTAAMKRWNPSAADCLPEYMKGMYMIVYDTVNEICQEAEKAQGRNTLDYARQAWDEYLDSYMQEAKWIVTGYLPTFAEYYENGKVSSGHRTAALQPILTMDIPFPPHILKEVDFPSKLNDLACAILRLRGDTRCYKADRARGEEASSISCYMKDNPGVTEEDALDHINAMISDVIRGLNWELLNPNSSVPISSKKHVFDISRAFHYGYKYRDGYSVANIETKSLVKRTVIDPVTL</sequence>
<keyword id="KW-0150">Chloroplast</keyword>
<keyword id="KW-0456">Lyase</keyword>
<keyword id="KW-0460">Magnesium</keyword>
<keyword id="KW-0479">Metal-binding</keyword>
<keyword id="KW-0934">Plastid</keyword>
<keyword id="KW-0809">Transit peptide</keyword>
<name>PINS2_PICGL</name>
<organism>
    <name type="scientific">Picea glauca</name>
    <name type="common">White spruce</name>
    <name type="synonym">Pinus glauca</name>
    <dbReference type="NCBI Taxonomy" id="3330"/>
    <lineage>
        <taxon>Eukaryota</taxon>
        <taxon>Viridiplantae</taxon>
        <taxon>Streptophyta</taxon>
        <taxon>Embryophyta</taxon>
        <taxon>Tracheophyta</taxon>
        <taxon>Spermatophyta</taxon>
        <taxon>Pinopsida</taxon>
        <taxon>Pinidae</taxon>
        <taxon>Conifers I</taxon>
        <taxon>Pinales</taxon>
        <taxon>Pinaceae</taxon>
        <taxon>Picea</taxon>
    </lineage>
</organism>